<feature type="chain" id="PRO_0000085115" description="Deoxyribodipyrimidine photo-lyase">
    <location>
        <begin position="1"/>
        <end position="420"/>
    </location>
</feature>
<feature type="domain" description="Photolyase/cryptochrome alpha/beta">
    <location>
        <begin position="2"/>
        <end position="124"/>
    </location>
</feature>
<feature type="region of interest" description="Disordered" evidence="2">
    <location>
        <begin position="147"/>
        <end position="176"/>
    </location>
</feature>
<feature type="region of interest" description="Interaction with DNA" evidence="1">
    <location>
        <begin position="244"/>
        <end position="251"/>
    </location>
</feature>
<feature type="region of interest" description="Interaction with DNA" evidence="1">
    <location>
        <begin position="310"/>
        <end position="311"/>
    </location>
</feature>
<feature type="compositionally biased region" description="Basic and acidic residues" evidence="2">
    <location>
        <begin position="159"/>
        <end position="170"/>
    </location>
</feature>
<feature type="binding site" evidence="3">
    <location>
        <position position="197"/>
    </location>
    <ligand>
        <name>FAD</name>
        <dbReference type="ChEBI" id="CHEBI:57692"/>
    </ligand>
</feature>
<feature type="binding site" evidence="1">
    <location>
        <position position="201"/>
    </location>
    <ligand>
        <name>DNA</name>
        <dbReference type="ChEBI" id="CHEBI:16991"/>
    </ligand>
</feature>
<feature type="binding site" evidence="3">
    <location>
        <begin position="209"/>
        <end position="213"/>
    </location>
    <ligand>
        <name>FAD</name>
        <dbReference type="ChEBI" id="CHEBI:57692"/>
    </ligand>
</feature>
<feature type="binding site" evidence="3">
    <location>
        <position position="241"/>
    </location>
    <ligand>
        <name>FAD</name>
        <dbReference type="ChEBI" id="CHEBI:57692"/>
    </ligand>
</feature>
<feature type="binding site" evidence="3">
    <location>
        <position position="248"/>
    </location>
    <ligand>
        <name>FAD</name>
        <dbReference type="ChEBI" id="CHEBI:57692"/>
    </ligand>
</feature>
<feature type="binding site" evidence="3">
    <location>
        <position position="310"/>
    </location>
    <ligand>
        <name>FAD</name>
        <dbReference type="ChEBI" id="CHEBI:57692"/>
    </ligand>
</feature>
<feature type="binding site" evidence="3">
    <location>
        <begin position="341"/>
        <end position="343"/>
    </location>
    <ligand>
        <name>FAD</name>
        <dbReference type="ChEBI" id="CHEBI:57692"/>
    </ligand>
</feature>
<feature type="binding site" evidence="1">
    <location>
        <position position="373"/>
    </location>
    <ligand>
        <name>DNA</name>
        <dbReference type="ChEBI" id="CHEBI:16991"/>
    </ligand>
</feature>
<feature type="site" description="Electron transfer via tryptophanyl radical" evidence="1">
    <location>
        <position position="275"/>
    </location>
</feature>
<feature type="site" description="Electron transfer via tryptophanyl radical" evidence="1">
    <location>
        <position position="328"/>
    </location>
</feature>
<feature type="site" description="Electron transfer via tryptophanyl radical" evidence="1">
    <location>
        <position position="351"/>
    </location>
</feature>
<feature type="mutagenesis site" description="Reduces CPD repair activity by 20%.">
    <original>R</original>
    <variation>A</variation>
    <location>
        <position position="201"/>
    </location>
</feature>
<feature type="mutagenesis site" description="Reduces CPD repair activity by 20%.">
    <original>K</original>
    <variation>A</variation>
    <location>
        <position position="240"/>
    </location>
</feature>
<feature type="mutagenesis site" description="Reduces CPD repair activity by 20%.">
    <original>W</original>
    <variation>A</variation>
    <location>
        <position position="247"/>
    </location>
</feature>
<feature type="mutagenesis site" description="Strongly reduces interaction with DNA." evidence="4">
    <original>R</original>
    <variation>A</variation>
    <location>
        <position position="311"/>
    </location>
</feature>
<feature type="mutagenesis site" description="Strongly reduces interaction with DNA. Reduces CPD repair activity by 80%." evidence="4">
    <original>W</original>
    <variation>A</variation>
    <location>
        <position position="353"/>
    </location>
</feature>
<feature type="mutagenesis site" description="Strongly reduces interaction with DNA." evidence="4">
    <original>R</original>
    <variation>A</variation>
    <location>
        <position position="366"/>
    </location>
</feature>
<feature type="strand" evidence="7">
    <location>
        <begin position="4"/>
        <end position="7"/>
    </location>
</feature>
<feature type="strand" evidence="8">
    <location>
        <begin position="14"/>
        <end position="16"/>
    </location>
</feature>
<feature type="helix" evidence="7">
    <location>
        <begin position="18"/>
        <end position="24"/>
    </location>
</feature>
<feature type="strand" evidence="7">
    <location>
        <begin position="29"/>
        <end position="35"/>
    </location>
</feature>
<feature type="helix" evidence="7">
    <location>
        <begin position="37"/>
        <end position="40"/>
    </location>
</feature>
<feature type="helix" evidence="7">
    <location>
        <begin position="44"/>
        <end position="63"/>
    </location>
</feature>
<feature type="strand" evidence="7">
    <location>
        <begin position="68"/>
        <end position="73"/>
    </location>
</feature>
<feature type="helix" evidence="7">
    <location>
        <begin position="75"/>
        <end position="85"/>
    </location>
</feature>
<feature type="strand" evidence="7">
    <location>
        <begin position="89"/>
        <end position="94"/>
    </location>
</feature>
<feature type="helix" evidence="7">
    <location>
        <begin position="99"/>
        <end position="111"/>
    </location>
</feature>
<feature type="strand" evidence="7">
    <location>
        <begin position="116"/>
        <end position="119"/>
    </location>
</feature>
<feature type="helix" evidence="7">
    <location>
        <begin position="136"/>
        <end position="140"/>
    </location>
</feature>
<feature type="helix" evidence="7">
    <location>
        <begin position="179"/>
        <end position="192"/>
    </location>
</feature>
<feature type="helix" evidence="7">
    <location>
        <begin position="194"/>
        <end position="196"/>
    </location>
</feature>
<feature type="helix" evidence="7">
    <location>
        <begin position="197"/>
        <end position="200"/>
    </location>
</feature>
<feature type="helix" evidence="7">
    <location>
        <begin position="213"/>
        <end position="217"/>
    </location>
</feature>
<feature type="helix" evidence="7">
    <location>
        <begin position="223"/>
        <end position="233"/>
    </location>
</feature>
<feature type="helix" evidence="7">
    <location>
        <begin position="236"/>
        <end position="257"/>
    </location>
</feature>
<feature type="helix" evidence="7">
    <location>
        <begin position="259"/>
        <end position="262"/>
    </location>
</feature>
<feature type="helix" evidence="7">
    <location>
        <begin position="268"/>
        <end position="270"/>
    </location>
</feature>
<feature type="helix" evidence="7">
    <location>
        <begin position="279"/>
        <end position="286"/>
    </location>
</feature>
<feature type="helix" evidence="7">
    <location>
        <begin position="293"/>
        <end position="305"/>
    </location>
</feature>
<feature type="helix" evidence="7">
    <location>
        <begin position="310"/>
        <end position="322"/>
    </location>
</feature>
<feature type="helix" evidence="7">
    <location>
        <begin position="328"/>
        <end position="338"/>
    </location>
</feature>
<feature type="helix" evidence="7">
    <location>
        <begin position="344"/>
        <end position="354"/>
    </location>
</feature>
<feature type="helix" evidence="7">
    <location>
        <begin position="359"/>
        <end position="361"/>
    </location>
</feature>
<feature type="helix" evidence="7">
    <location>
        <begin position="370"/>
        <end position="377"/>
    </location>
</feature>
<feature type="strand" evidence="6">
    <location>
        <begin position="379"/>
        <end position="381"/>
    </location>
</feature>
<feature type="helix" evidence="7">
    <location>
        <begin position="382"/>
        <end position="387"/>
    </location>
</feature>
<feature type="strand" evidence="7">
    <location>
        <begin position="392"/>
        <end position="395"/>
    </location>
</feature>
<feature type="helix" evidence="7">
    <location>
        <begin position="403"/>
        <end position="418"/>
    </location>
</feature>
<gene>
    <name type="primary">phr</name>
    <name type="ordered locus">TTHB102</name>
</gene>
<organism>
    <name type="scientific">Thermus thermophilus (strain ATCC 27634 / DSM 579 / HB8)</name>
    <dbReference type="NCBI Taxonomy" id="300852"/>
    <lineage>
        <taxon>Bacteria</taxon>
        <taxon>Thermotogati</taxon>
        <taxon>Deinococcota</taxon>
        <taxon>Deinococci</taxon>
        <taxon>Thermales</taxon>
        <taxon>Thermaceae</taxon>
        <taxon>Thermus</taxon>
    </lineage>
</organism>
<sequence>MGPLLVWHRGDLRLHDHPALLEALARGPVVGLVVLDPNNLKTTPRRRAWFLENVRALREAYRARGGALWVLEGLPWEKVPEAARRLKAKAVYALTSHTPYGRYRDGRVREALPVPLHLLPAPHLLPPDLPRAYRVYTPFSRLYRGAAPPLPPPEALPKGPEEGEIPREDPGLPLPEPGEEAALAGLRAFLEAKLPRYAEERDRLDGEGGSRLSPYFALGVLSPRLAAWEAERRGGEGARKWVAELLWRDFSYHLLYHFPWMAERPLDPRFQAFPWQEDEALFQAWYEGKTGVPLVDAAMRELHATGFLSNRARMNAAQFAVKHLLLPWKRCEEAFRHLLLDGDRAVNLQGWQWAGGLGVDAAPYFRVFNPVLQGERHDPEGRWLKRWAPEYPSYAPKDPVVDLEEARRRYLRLARDLARG</sequence>
<proteinExistence type="evidence at protein level"/>
<evidence type="ECO:0000250" key="1"/>
<evidence type="ECO:0000256" key="2">
    <source>
        <dbReference type="SAM" id="MobiDB-lite"/>
    </source>
</evidence>
<evidence type="ECO:0000269" key="3">
    <source>
    </source>
</evidence>
<evidence type="ECO:0000269" key="4">
    <source>
    </source>
</evidence>
<evidence type="ECO:0000305" key="5"/>
<evidence type="ECO:0007829" key="6">
    <source>
        <dbReference type="PDB" id="1IQU"/>
    </source>
</evidence>
<evidence type="ECO:0007829" key="7">
    <source>
        <dbReference type="PDB" id="2J07"/>
    </source>
</evidence>
<evidence type="ECO:0007829" key="8">
    <source>
        <dbReference type="PDB" id="2J09"/>
    </source>
</evidence>
<name>PHR_THET8</name>
<protein>
    <recommendedName>
        <fullName>Deoxyribodipyrimidine photo-lyase</fullName>
        <ecNumber>4.1.99.3</ecNumber>
    </recommendedName>
    <alternativeName>
        <fullName>DNA photolyase</fullName>
    </alternativeName>
    <alternativeName>
        <fullName>Photoreactivating enzyme</fullName>
    </alternativeName>
</protein>
<geneLocation type="plasmid">
    <name>pTT27</name>
</geneLocation>
<dbReference type="EC" id="4.1.99.3"/>
<dbReference type="EMBL" id="AB064548">
    <property type="protein sequence ID" value="BAB61864.2"/>
    <property type="molecule type" value="Genomic_DNA"/>
</dbReference>
<dbReference type="EMBL" id="AP008227">
    <property type="protein sequence ID" value="BAD71898.1"/>
    <property type="molecule type" value="Genomic_DNA"/>
</dbReference>
<dbReference type="RefSeq" id="WP_011229192.1">
    <property type="nucleotide sequence ID" value="NC_006462.1"/>
</dbReference>
<dbReference type="RefSeq" id="YP_145341.1">
    <property type="nucleotide sequence ID" value="NC_006462.1"/>
</dbReference>
<dbReference type="PDB" id="1IQR">
    <property type="method" value="X-ray"/>
    <property type="resolution" value="2.10 A"/>
    <property type="chains" value="A=1-420"/>
</dbReference>
<dbReference type="PDB" id="1IQU">
    <property type="method" value="X-ray"/>
    <property type="resolution" value="2.20 A"/>
    <property type="chains" value="A=1-420"/>
</dbReference>
<dbReference type="PDB" id="2J07">
    <property type="method" value="X-ray"/>
    <property type="resolution" value="1.95 A"/>
    <property type="chains" value="A=1-420"/>
</dbReference>
<dbReference type="PDB" id="2J08">
    <property type="method" value="X-ray"/>
    <property type="resolution" value="2.61 A"/>
    <property type="chains" value="A=1-420"/>
</dbReference>
<dbReference type="PDB" id="2J09">
    <property type="method" value="X-ray"/>
    <property type="resolution" value="2.00 A"/>
    <property type="chains" value="A=1-420"/>
</dbReference>
<dbReference type="PDBsum" id="1IQR"/>
<dbReference type="PDBsum" id="1IQU"/>
<dbReference type="PDBsum" id="2J07"/>
<dbReference type="PDBsum" id="2J08"/>
<dbReference type="PDBsum" id="2J09"/>
<dbReference type="SMR" id="P61497"/>
<dbReference type="DrugBank" id="DB03147">
    <property type="generic name" value="Flavin adenine dinucleotide"/>
</dbReference>
<dbReference type="DrugBank" id="DB03462">
    <property type="generic name" value="Thymine"/>
</dbReference>
<dbReference type="EnsemblBacteria" id="BAD71898">
    <property type="protein sequence ID" value="BAD71898"/>
    <property type="gene ID" value="BAD71898"/>
</dbReference>
<dbReference type="GeneID" id="3169528"/>
<dbReference type="KEGG" id="ttj:TTHB102"/>
<dbReference type="PATRIC" id="fig|300852.9.peg.2045"/>
<dbReference type="HOGENOM" id="CLU_010348_2_2_0"/>
<dbReference type="PhylomeDB" id="P61497"/>
<dbReference type="BRENDA" id="4.1.99.3">
    <property type="organism ID" value="2305"/>
</dbReference>
<dbReference type="EvolutionaryTrace" id="P61497"/>
<dbReference type="Proteomes" id="UP000000532">
    <property type="component" value="Plasmid pTT27"/>
</dbReference>
<dbReference type="GO" id="GO:0003904">
    <property type="term" value="F:deoxyribodipyrimidine photo-lyase activity"/>
    <property type="evidence" value="ECO:0007669"/>
    <property type="project" value="UniProtKB-EC"/>
</dbReference>
<dbReference type="GO" id="GO:0003677">
    <property type="term" value="F:DNA binding"/>
    <property type="evidence" value="ECO:0007669"/>
    <property type="project" value="UniProtKB-KW"/>
</dbReference>
<dbReference type="GO" id="GO:0071949">
    <property type="term" value="F:FAD binding"/>
    <property type="evidence" value="ECO:0007669"/>
    <property type="project" value="TreeGrafter"/>
</dbReference>
<dbReference type="GO" id="GO:0006281">
    <property type="term" value="P:DNA repair"/>
    <property type="evidence" value="ECO:0007669"/>
    <property type="project" value="UniProtKB-KW"/>
</dbReference>
<dbReference type="GO" id="GO:0009416">
    <property type="term" value="P:response to light stimulus"/>
    <property type="evidence" value="ECO:0007669"/>
    <property type="project" value="TreeGrafter"/>
</dbReference>
<dbReference type="Gene3D" id="1.25.40.80">
    <property type="match status" value="1"/>
</dbReference>
<dbReference type="Gene3D" id="1.10.579.10">
    <property type="entry name" value="DNA Cyclobutane Dipyrimidine Photolyase, subunit A, domain 3"/>
    <property type="match status" value="1"/>
</dbReference>
<dbReference type="Gene3D" id="3.40.50.620">
    <property type="entry name" value="HUPs"/>
    <property type="match status" value="1"/>
</dbReference>
<dbReference type="InterPro" id="IPR036134">
    <property type="entry name" value="Crypto/Photolyase_FAD-like_sf"/>
</dbReference>
<dbReference type="InterPro" id="IPR036155">
    <property type="entry name" value="Crypto/Photolyase_N_sf"/>
</dbReference>
<dbReference type="InterPro" id="IPR005101">
    <property type="entry name" value="Cryptochr/Photolyase_FAD-bd"/>
</dbReference>
<dbReference type="InterPro" id="IPR002081">
    <property type="entry name" value="Cryptochrome/DNA_photolyase_1"/>
</dbReference>
<dbReference type="InterPro" id="IPR018394">
    <property type="entry name" value="DNA_photolyase_1_CS_C"/>
</dbReference>
<dbReference type="InterPro" id="IPR006050">
    <property type="entry name" value="DNA_photolyase_N"/>
</dbReference>
<dbReference type="InterPro" id="IPR014729">
    <property type="entry name" value="Rossmann-like_a/b/a_fold"/>
</dbReference>
<dbReference type="PANTHER" id="PTHR11455">
    <property type="entry name" value="CRYPTOCHROME"/>
    <property type="match status" value="1"/>
</dbReference>
<dbReference type="PANTHER" id="PTHR11455:SF9">
    <property type="entry name" value="CRYPTOCHROME CIRCADIAN CLOCK 5 ISOFORM X1"/>
    <property type="match status" value="1"/>
</dbReference>
<dbReference type="Pfam" id="PF00875">
    <property type="entry name" value="DNA_photolyase"/>
    <property type="match status" value="1"/>
</dbReference>
<dbReference type="Pfam" id="PF03441">
    <property type="entry name" value="FAD_binding_7"/>
    <property type="match status" value="1"/>
</dbReference>
<dbReference type="PRINTS" id="PR00147">
    <property type="entry name" value="DNAPHOTLYASE"/>
</dbReference>
<dbReference type="SUPFAM" id="SSF48173">
    <property type="entry name" value="Cryptochrome/photolyase FAD-binding domain"/>
    <property type="match status" value="1"/>
</dbReference>
<dbReference type="SUPFAM" id="SSF52425">
    <property type="entry name" value="Cryptochrome/photolyase, N-terminal domain"/>
    <property type="match status" value="1"/>
</dbReference>
<dbReference type="PROSITE" id="PS00394">
    <property type="entry name" value="DNA_PHOTOLYASES_1_1"/>
    <property type="match status" value="1"/>
</dbReference>
<dbReference type="PROSITE" id="PS00691">
    <property type="entry name" value="DNA_PHOTOLYASES_1_2"/>
    <property type="match status" value="1"/>
</dbReference>
<dbReference type="PROSITE" id="PS51645">
    <property type="entry name" value="PHR_CRY_ALPHA_BETA"/>
    <property type="match status" value="1"/>
</dbReference>
<reference key="1">
    <citation type="submission" date="2001-08" db="EMBL/GenBank/DDBJ databases">
        <title>Characterization of photolyase from Thermus thermophilus HB8.</title>
        <authorList>
            <person name="Tsujiuchi H."/>
            <person name="Masui R."/>
            <person name="Inoue Y."/>
            <person name="Shibata T."/>
            <person name="Yokoyama S."/>
            <person name="Kuramitsu S."/>
        </authorList>
    </citation>
    <scope>NUCLEOTIDE SEQUENCE [GENOMIC DNA]</scope>
</reference>
<reference key="2">
    <citation type="submission" date="2004-11" db="EMBL/GenBank/DDBJ databases">
        <title>Complete genome sequence of Thermus thermophilus HB8.</title>
        <authorList>
            <person name="Masui R."/>
            <person name="Kurokawa K."/>
            <person name="Nakagawa N."/>
            <person name="Tokunaga F."/>
            <person name="Koyama Y."/>
            <person name="Shibata T."/>
            <person name="Oshima T."/>
            <person name="Yokoyama S."/>
            <person name="Yasunaga T."/>
            <person name="Kuramitsu S."/>
        </authorList>
    </citation>
    <scope>NUCLEOTIDE SEQUENCE [LARGE SCALE GENOMIC DNA]</scope>
    <source>
        <strain>ATCC 27634 / DSM 579 / HB8</strain>
        <plasmid>pTT27</plasmid>
    </source>
</reference>
<reference key="3">
    <citation type="journal article" date="2004" name="J. Biol. Chem.">
        <title>Investigation of the cyclobutane pyrimidine dimer (CPD) photolyase DNA recognition mechanism by NMR analyses.</title>
        <authorList>
            <person name="Torizawa T."/>
            <person name="Ueda T."/>
            <person name="Kuramitsu S."/>
            <person name="Hitomi K."/>
            <person name="Todo T."/>
            <person name="Iwai S."/>
            <person name="Morikawa K."/>
            <person name="Shimada I."/>
        </authorList>
    </citation>
    <scope>STRUCTURE BY NMR OF INTERACTION WITH DNA</scope>
    <scope>MUTAGENESIS OF ARG-311; TRP-353 AND ARG-366</scope>
</reference>
<reference key="4">
    <citation type="journal article" date="2005" name="Biochim. Biophys. Acta">
        <title>Light-driven enzymatic catalysis of DNA repair: a review of recent biophysical studies on photolyase.</title>
        <authorList>
            <person name="Weber S."/>
        </authorList>
    </citation>
    <scope>REVIEW</scope>
</reference>
<reference key="5">
    <citation type="journal article" date="2001" name="Proc. Natl. Acad. Sci. U.S.A.">
        <title>Crystal structure of thermostable DNA photolyase: pyrimidine-dimer recognition mechanism.</title>
        <authorList>
            <person name="Komori H."/>
            <person name="Masui R."/>
            <person name="Kuramitsu S."/>
            <person name="Yokoyama S."/>
            <person name="Shibata T."/>
            <person name="Inoue Y."/>
            <person name="Miki K."/>
        </authorList>
    </citation>
    <scope>X-RAY CRYSTALLOGRAPHY (2.1 ANGSTROMS) IN COMPLEX WITH FAD AND THYMINE</scope>
</reference>
<reference key="6">
    <citation type="journal article" date="2002" name="Proc. Natl. Acad. Sci. U.S.A.">
        <authorList>
            <person name="Komori H."/>
            <person name="Masui R."/>
            <person name="Kuramitsu S."/>
            <person name="Yokoyama S."/>
            <person name="Shibata T."/>
            <person name="Inoue Y."/>
            <person name="Miki K."/>
        </authorList>
    </citation>
    <scope>ERRATUM OF PUBMED:11707580</scope>
</reference>
<keyword id="KW-0002">3D-structure</keyword>
<keyword id="KW-0157">Chromophore</keyword>
<keyword id="KW-0227">DNA damage</keyword>
<keyword id="KW-0234">DNA repair</keyword>
<keyword id="KW-0238">DNA-binding</keyword>
<keyword id="KW-0274">FAD</keyword>
<keyword id="KW-0285">Flavoprotein</keyword>
<keyword id="KW-0456">Lyase</keyword>
<keyword id="KW-0547">Nucleotide-binding</keyword>
<keyword id="KW-0614">Plasmid</keyword>
<keyword id="KW-1185">Reference proteome</keyword>
<comment type="function">
    <text evidence="1">Involved in repair of UV radiation-induced DNA damage. Catalyzes the light-dependent monomerization (300-600 nm) of cyclobutyl pyrimidine dimers (in cis-syn configuration), which are formed between adjacent bases on the same DNA strand upon exposure to ultraviolet radiation (By similarity).</text>
</comment>
<comment type="catalytic activity">
    <reaction>
        <text>cyclobutadipyrimidine (in DNA) = 2 pyrimidine residues (in DNA).</text>
        <dbReference type="EC" id="4.1.99.3"/>
    </reaction>
</comment>
<comment type="cofactor">
    <cofactor>
        <name>FAD</name>
        <dbReference type="ChEBI" id="CHEBI:57692"/>
    </cofactor>
    <text>Binds 1 FAD per subunit.</text>
</comment>
<comment type="subunit">
    <text evidence="1">Monomer.</text>
</comment>
<comment type="similarity">
    <text evidence="5">Belongs to the DNA photolyase class-1 family.</text>
</comment>
<accession>P61497</accession>
<accession>P37250</accession>
<accession>Q53W60</accession>